<comment type="function">
    <text evidence="1">Exhibits a very high intrinsic GTPase hydrolysis rate. Involved in the addition of a carboxymethylaminomethyl (cmnm) group at the wobble position (U34) of certain tRNAs, forming tRNA-cmnm(5)s(2)U34.</text>
</comment>
<comment type="cofactor">
    <cofactor evidence="1">
        <name>K(+)</name>
        <dbReference type="ChEBI" id="CHEBI:29103"/>
    </cofactor>
    <text evidence="1">Binds 1 potassium ion per subunit.</text>
</comment>
<comment type="subunit">
    <text evidence="1">Homodimer. Heterotetramer of two MnmE and two MnmG subunits.</text>
</comment>
<comment type="subcellular location">
    <subcellularLocation>
        <location evidence="1">Cytoplasm</location>
    </subcellularLocation>
</comment>
<comment type="similarity">
    <text evidence="1">Belongs to the TRAFAC class TrmE-Era-EngA-EngB-Septin-like GTPase superfamily. TrmE GTPase family.</text>
</comment>
<organism>
    <name type="scientific">Psychromonas ingrahamii (strain DSM 17664 / CCUG 51855 / 37)</name>
    <dbReference type="NCBI Taxonomy" id="357804"/>
    <lineage>
        <taxon>Bacteria</taxon>
        <taxon>Pseudomonadati</taxon>
        <taxon>Pseudomonadota</taxon>
        <taxon>Gammaproteobacteria</taxon>
        <taxon>Alteromonadales</taxon>
        <taxon>Psychromonadaceae</taxon>
        <taxon>Psychromonas</taxon>
    </lineage>
</organism>
<accession>A1T0N0</accession>
<protein>
    <recommendedName>
        <fullName evidence="1">tRNA modification GTPase MnmE</fullName>
        <ecNumber evidence="1">3.6.-.-</ecNumber>
    </recommendedName>
</protein>
<proteinExistence type="inferred from homology"/>
<feature type="chain" id="PRO_1000048862" description="tRNA modification GTPase MnmE">
    <location>
        <begin position="1"/>
        <end position="455"/>
    </location>
</feature>
<feature type="domain" description="TrmE-type G">
    <location>
        <begin position="217"/>
        <end position="378"/>
    </location>
</feature>
<feature type="binding site" evidence="1">
    <location>
        <position position="24"/>
    </location>
    <ligand>
        <name>(6S)-5-formyl-5,6,7,8-tetrahydrofolate</name>
        <dbReference type="ChEBI" id="CHEBI:57457"/>
    </ligand>
</feature>
<feature type="binding site" evidence="1">
    <location>
        <position position="81"/>
    </location>
    <ligand>
        <name>(6S)-5-formyl-5,6,7,8-tetrahydrofolate</name>
        <dbReference type="ChEBI" id="CHEBI:57457"/>
    </ligand>
</feature>
<feature type="binding site" evidence="1">
    <location>
        <position position="121"/>
    </location>
    <ligand>
        <name>(6S)-5-formyl-5,6,7,8-tetrahydrofolate</name>
        <dbReference type="ChEBI" id="CHEBI:57457"/>
    </ligand>
</feature>
<feature type="binding site" evidence="1">
    <location>
        <begin position="227"/>
        <end position="232"/>
    </location>
    <ligand>
        <name>GTP</name>
        <dbReference type="ChEBI" id="CHEBI:37565"/>
    </ligand>
</feature>
<feature type="binding site" evidence="1">
    <location>
        <position position="227"/>
    </location>
    <ligand>
        <name>K(+)</name>
        <dbReference type="ChEBI" id="CHEBI:29103"/>
    </ligand>
</feature>
<feature type="binding site" evidence="1">
    <location>
        <position position="231"/>
    </location>
    <ligand>
        <name>Mg(2+)</name>
        <dbReference type="ChEBI" id="CHEBI:18420"/>
    </ligand>
</feature>
<feature type="binding site" evidence="1">
    <location>
        <begin position="246"/>
        <end position="252"/>
    </location>
    <ligand>
        <name>GTP</name>
        <dbReference type="ChEBI" id="CHEBI:37565"/>
    </ligand>
</feature>
<feature type="binding site" evidence="1">
    <location>
        <position position="246"/>
    </location>
    <ligand>
        <name>K(+)</name>
        <dbReference type="ChEBI" id="CHEBI:29103"/>
    </ligand>
</feature>
<feature type="binding site" evidence="1">
    <location>
        <position position="248"/>
    </location>
    <ligand>
        <name>K(+)</name>
        <dbReference type="ChEBI" id="CHEBI:29103"/>
    </ligand>
</feature>
<feature type="binding site" evidence="1">
    <location>
        <position position="251"/>
    </location>
    <ligand>
        <name>K(+)</name>
        <dbReference type="ChEBI" id="CHEBI:29103"/>
    </ligand>
</feature>
<feature type="binding site" evidence="1">
    <location>
        <position position="252"/>
    </location>
    <ligand>
        <name>Mg(2+)</name>
        <dbReference type="ChEBI" id="CHEBI:18420"/>
    </ligand>
</feature>
<feature type="binding site" evidence="1">
    <location>
        <begin position="271"/>
        <end position="274"/>
    </location>
    <ligand>
        <name>GTP</name>
        <dbReference type="ChEBI" id="CHEBI:37565"/>
    </ligand>
</feature>
<feature type="binding site" evidence="1">
    <location>
        <begin position="336"/>
        <end position="339"/>
    </location>
    <ligand>
        <name>GTP</name>
        <dbReference type="ChEBI" id="CHEBI:37565"/>
    </ligand>
</feature>
<feature type="binding site" evidence="1">
    <location>
        <position position="455"/>
    </location>
    <ligand>
        <name>(6S)-5-formyl-5,6,7,8-tetrahydrofolate</name>
        <dbReference type="ChEBI" id="CHEBI:57457"/>
    </ligand>
</feature>
<evidence type="ECO:0000255" key="1">
    <source>
        <dbReference type="HAMAP-Rule" id="MF_00379"/>
    </source>
</evidence>
<name>MNME_PSYIN</name>
<gene>
    <name evidence="1" type="primary">mnmE</name>
    <name evidence="1" type="synonym">trmE</name>
    <name type="ordered locus">Ping_3612</name>
</gene>
<sequence>MIKAIDTIVAQATAPGRGGVGIIRISGPDVEAVAKVILGKVPKLRFAEYLSFSDQHNEVLDQGIALFFKAPNSFTGEDVLELQGHGGPVVMDMLIKAILSIKNLRGANPGEFSERAFMNDKLDLAQAEGIADLIEATSEQAAKSALHSLQGEFSEKIEQLVESLIYLRIYVEASIDFPEEEVDFLSDGKISKGLYQIIDNLEAVKKQAKQGAILRDGMKVVIAGRPNAGKSSLLNSLVGVERAIVTDIAGTTRDVMREHIHIDGMPLHIIDTAGLREGADEIEKIGIERAWQEITTADRILFMLDATTTSAEDPRQIWPDFIDKLPKSVGLTVVRNKADLTGEAFSMTENHDHPVYRISAKTGQGVDLLKEHLKDIMGYQGHTTSGFMARRRHLEAIDNAQRHLLEGKVQLEEYKAGELLAEELRLTQQYLSEITGAFSSDDLLGKIFSSFCIGK</sequence>
<dbReference type="EC" id="3.6.-.-" evidence="1"/>
<dbReference type="EMBL" id="CP000510">
    <property type="protein sequence ID" value="ABM05295.1"/>
    <property type="molecule type" value="Genomic_DNA"/>
</dbReference>
<dbReference type="RefSeq" id="WP_011771843.1">
    <property type="nucleotide sequence ID" value="NC_008709.1"/>
</dbReference>
<dbReference type="SMR" id="A1T0N0"/>
<dbReference type="STRING" id="357804.Ping_3612"/>
<dbReference type="KEGG" id="pin:Ping_3612"/>
<dbReference type="eggNOG" id="COG0486">
    <property type="taxonomic scope" value="Bacteria"/>
</dbReference>
<dbReference type="HOGENOM" id="CLU_019624_4_1_6"/>
<dbReference type="OrthoDB" id="9805918at2"/>
<dbReference type="Proteomes" id="UP000000639">
    <property type="component" value="Chromosome"/>
</dbReference>
<dbReference type="GO" id="GO:0005829">
    <property type="term" value="C:cytosol"/>
    <property type="evidence" value="ECO:0007669"/>
    <property type="project" value="TreeGrafter"/>
</dbReference>
<dbReference type="GO" id="GO:0005525">
    <property type="term" value="F:GTP binding"/>
    <property type="evidence" value="ECO:0007669"/>
    <property type="project" value="UniProtKB-UniRule"/>
</dbReference>
<dbReference type="GO" id="GO:0003924">
    <property type="term" value="F:GTPase activity"/>
    <property type="evidence" value="ECO:0007669"/>
    <property type="project" value="UniProtKB-UniRule"/>
</dbReference>
<dbReference type="GO" id="GO:0046872">
    <property type="term" value="F:metal ion binding"/>
    <property type="evidence" value="ECO:0007669"/>
    <property type="project" value="UniProtKB-KW"/>
</dbReference>
<dbReference type="GO" id="GO:0030488">
    <property type="term" value="P:tRNA methylation"/>
    <property type="evidence" value="ECO:0007669"/>
    <property type="project" value="TreeGrafter"/>
</dbReference>
<dbReference type="GO" id="GO:0002098">
    <property type="term" value="P:tRNA wobble uridine modification"/>
    <property type="evidence" value="ECO:0007669"/>
    <property type="project" value="TreeGrafter"/>
</dbReference>
<dbReference type="CDD" id="cd04164">
    <property type="entry name" value="trmE"/>
    <property type="match status" value="1"/>
</dbReference>
<dbReference type="CDD" id="cd14858">
    <property type="entry name" value="TrmE_N"/>
    <property type="match status" value="1"/>
</dbReference>
<dbReference type="FunFam" id="3.30.1360.120:FF:000001">
    <property type="entry name" value="tRNA modification GTPase MnmE"/>
    <property type="match status" value="1"/>
</dbReference>
<dbReference type="FunFam" id="3.40.50.300:FF:000249">
    <property type="entry name" value="tRNA modification GTPase MnmE"/>
    <property type="match status" value="1"/>
</dbReference>
<dbReference type="Gene3D" id="3.40.50.300">
    <property type="entry name" value="P-loop containing nucleotide triphosphate hydrolases"/>
    <property type="match status" value="1"/>
</dbReference>
<dbReference type="Gene3D" id="3.30.1360.120">
    <property type="entry name" value="Probable tRNA modification gtpase trme, domain 1"/>
    <property type="match status" value="1"/>
</dbReference>
<dbReference type="Gene3D" id="1.20.120.430">
    <property type="entry name" value="tRNA modification GTPase MnmE domain 2"/>
    <property type="match status" value="1"/>
</dbReference>
<dbReference type="HAMAP" id="MF_00379">
    <property type="entry name" value="GTPase_MnmE"/>
    <property type="match status" value="1"/>
</dbReference>
<dbReference type="InterPro" id="IPR031168">
    <property type="entry name" value="G_TrmE"/>
</dbReference>
<dbReference type="InterPro" id="IPR006073">
    <property type="entry name" value="GTP-bd"/>
</dbReference>
<dbReference type="InterPro" id="IPR018948">
    <property type="entry name" value="GTP-bd_TrmE_N"/>
</dbReference>
<dbReference type="InterPro" id="IPR004520">
    <property type="entry name" value="GTPase_MnmE"/>
</dbReference>
<dbReference type="InterPro" id="IPR027368">
    <property type="entry name" value="MnmE_dom2"/>
</dbReference>
<dbReference type="InterPro" id="IPR025867">
    <property type="entry name" value="MnmE_helical"/>
</dbReference>
<dbReference type="InterPro" id="IPR027417">
    <property type="entry name" value="P-loop_NTPase"/>
</dbReference>
<dbReference type="InterPro" id="IPR005225">
    <property type="entry name" value="Small_GTP-bd"/>
</dbReference>
<dbReference type="InterPro" id="IPR027266">
    <property type="entry name" value="TrmE/GcvT_dom1"/>
</dbReference>
<dbReference type="NCBIfam" id="TIGR00450">
    <property type="entry name" value="mnmE_trmE_thdF"/>
    <property type="match status" value="1"/>
</dbReference>
<dbReference type="NCBIfam" id="NF003661">
    <property type="entry name" value="PRK05291.1-3"/>
    <property type="match status" value="1"/>
</dbReference>
<dbReference type="NCBIfam" id="TIGR00231">
    <property type="entry name" value="small_GTP"/>
    <property type="match status" value="1"/>
</dbReference>
<dbReference type="PANTHER" id="PTHR42714">
    <property type="entry name" value="TRNA MODIFICATION GTPASE GTPBP3"/>
    <property type="match status" value="1"/>
</dbReference>
<dbReference type="PANTHER" id="PTHR42714:SF2">
    <property type="entry name" value="TRNA MODIFICATION GTPASE GTPBP3, MITOCHONDRIAL"/>
    <property type="match status" value="1"/>
</dbReference>
<dbReference type="Pfam" id="PF01926">
    <property type="entry name" value="MMR_HSR1"/>
    <property type="match status" value="1"/>
</dbReference>
<dbReference type="Pfam" id="PF12631">
    <property type="entry name" value="MnmE_helical"/>
    <property type="match status" value="1"/>
</dbReference>
<dbReference type="Pfam" id="PF10396">
    <property type="entry name" value="TrmE_N"/>
    <property type="match status" value="1"/>
</dbReference>
<dbReference type="PRINTS" id="PR00326">
    <property type="entry name" value="GTP1OBG"/>
</dbReference>
<dbReference type="SUPFAM" id="SSF52540">
    <property type="entry name" value="P-loop containing nucleoside triphosphate hydrolases"/>
    <property type="match status" value="1"/>
</dbReference>
<dbReference type="SUPFAM" id="SSF116878">
    <property type="entry name" value="TrmE connector domain"/>
    <property type="match status" value="1"/>
</dbReference>
<dbReference type="PROSITE" id="PS51709">
    <property type="entry name" value="G_TRME"/>
    <property type="match status" value="1"/>
</dbReference>
<reference key="1">
    <citation type="journal article" date="2008" name="BMC Genomics">
        <title>Genomics of an extreme psychrophile, Psychromonas ingrahamii.</title>
        <authorList>
            <person name="Riley M."/>
            <person name="Staley J.T."/>
            <person name="Danchin A."/>
            <person name="Wang T.Z."/>
            <person name="Brettin T.S."/>
            <person name="Hauser L.J."/>
            <person name="Land M.L."/>
            <person name="Thompson L.S."/>
        </authorList>
    </citation>
    <scope>NUCLEOTIDE SEQUENCE [LARGE SCALE GENOMIC DNA]</scope>
    <source>
        <strain>DSM 17664 / CCUG 51855 / 37</strain>
    </source>
</reference>
<keyword id="KW-0963">Cytoplasm</keyword>
<keyword id="KW-0342">GTP-binding</keyword>
<keyword id="KW-0378">Hydrolase</keyword>
<keyword id="KW-0460">Magnesium</keyword>
<keyword id="KW-0479">Metal-binding</keyword>
<keyword id="KW-0547">Nucleotide-binding</keyword>
<keyword id="KW-0630">Potassium</keyword>
<keyword id="KW-1185">Reference proteome</keyword>
<keyword id="KW-0819">tRNA processing</keyword>